<accession>Q0III9</accession>
<evidence type="ECO:0000250" key="1"/>
<evidence type="ECO:0000250" key="2">
    <source>
        <dbReference type="UniProtKB" id="Q08043"/>
    </source>
</evidence>
<evidence type="ECO:0000255" key="3">
    <source>
        <dbReference type="PROSITE-ProRule" id="PRU00044"/>
    </source>
</evidence>
<evidence type="ECO:0000255" key="4">
    <source>
        <dbReference type="PROSITE-ProRule" id="PRU00448"/>
    </source>
</evidence>
<evidence type="ECO:0000305" key="5"/>
<protein>
    <recommendedName>
        <fullName>Alpha-actinin-3</fullName>
    </recommendedName>
    <alternativeName>
        <fullName>Alpha-actinin skeletal muscle isoform 3</fullName>
    </alternativeName>
    <alternativeName>
        <fullName>F-actin cross-linking protein</fullName>
    </alternativeName>
</protein>
<dbReference type="EMBL" id="BC122618">
    <property type="protein sequence ID" value="AAI22619.1"/>
    <property type="molecule type" value="mRNA"/>
</dbReference>
<dbReference type="RefSeq" id="NP_001069625.1">
    <property type="nucleotide sequence ID" value="NM_001076157.1"/>
</dbReference>
<dbReference type="RefSeq" id="XP_010819427.1">
    <property type="nucleotide sequence ID" value="XM_010821125.2"/>
</dbReference>
<dbReference type="SMR" id="Q0III9"/>
<dbReference type="FunCoup" id="Q0III9">
    <property type="interactions" value="323"/>
</dbReference>
<dbReference type="STRING" id="9913.ENSBTAP00000030018"/>
<dbReference type="PaxDb" id="9913-ENSBTAP00000030018"/>
<dbReference type="PeptideAtlas" id="Q0III9"/>
<dbReference type="Ensembl" id="ENSBTAT00000030030.4">
    <property type="protein sequence ID" value="ENSBTAP00000030018.4"/>
    <property type="gene ID" value="ENSBTAG00000022244.5"/>
</dbReference>
<dbReference type="GeneID" id="539375"/>
<dbReference type="KEGG" id="bta:539375"/>
<dbReference type="CTD" id="89"/>
<dbReference type="VEuPathDB" id="HostDB:ENSBTAG00000022244"/>
<dbReference type="VGNC" id="VGNC:53654">
    <property type="gene designation" value="ACTN3"/>
</dbReference>
<dbReference type="eggNOG" id="KOG0035">
    <property type="taxonomic scope" value="Eukaryota"/>
</dbReference>
<dbReference type="GeneTree" id="ENSGT00940000153968"/>
<dbReference type="InParanoid" id="Q0III9"/>
<dbReference type="OMA" id="YNHSYMV"/>
<dbReference type="OrthoDB" id="10017054at2759"/>
<dbReference type="Reactome" id="R-BTA-390522">
    <property type="pathway name" value="Striated Muscle Contraction"/>
</dbReference>
<dbReference type="Proteomes" id="UP000009136">
    <property type="component" value="Chromosome 29"/>
</dbReference>
<dbReference type="Bgee" id="ENSBTAG00000022244">
    <property type="expression patterns" value="Expressed in biceps femoris and 94 other cell types or tissues"/>
</dbReference>
<dbReference type="GO" id="GO:0005903">
    <property type="term" value="C:brush border"/>
    <property type="evidence" value="ECO:0007669"/>
    <property type="project" value="Ensembl"/>
</dbReference>
<dbReference type="GO" id="GO:0030054">
    <property type="term" value="C:cell junction"/>
    <property type="evidence" value="ECO:0000318"/>
    <property type="project" value="GO_Central"/>
</dbReference>
<dbReference type="GO" id="GO:0042995">
    <property type="term" value="C:cell projection"/>
    <property type="evidence" value="ECO:0000318"/>
    <property type="project" value="GO_Central"/>
</dbReference>
<dbReference type="GO" id="GO:0030864">
    <property type="term" value="C:cortical actin cytoskeleton"/>
    <property type="evidence" value="ECO:0000318"/>
    <property type="project" value="GO_Central"/>
</dbReference>
<dbReference type="GO" id="GO:0005925">
    <property type="term" value="C:focal adhesion"/>
    <property type="evidence" value="ECO:0007669"/>
    <property type="project" value="Ensembl"/>
</dbReference>
<dbReference type="GO" id="GO:0005886">
    <property type="term" value="C:plasma membrane"/>
    <property type="evidence" value="ECO:0000318"/>
    <property type="project" value="GO_Central"/>
</dbReference>
<dbReference type="GO" id="GO:0030018">
    <property type="term" value="C:Z disc"/>
    <property type="evidence" value="ECO:0000318"/>
    <property type="project" value="GO_Central"/>
</dbReference>
<dbReference type="GO" id="GO:0051015">
    <property type="term" value="F:actin filament binding"/>
    <property type="evidence" value="ECO:0000318"/>
    <property type="project" value="GO_Central"/>
</dbReference>
<dbReference type="GO" id="GO:0005509">
    <property type="term" value="F:calcium ion binding"/>
    <property type="evidence" value="ECO:0007669"/>
    <property type="project" value="InterPro"/>
</dbReference>
<dbReference type="GO" id="GO:0042802">
    <property type="term" value="F:identical protein binding"/>
    <property type="evidence" value="ECO:0007669"/>
    <property type="project" value="Ensembl"/>
</dbReference>
<dbReference type="GO" id="GO:0044325">
    <property type="term" value="F:transmembrane transporter binding"/>
    <property type="evidence" value="ECO:0007669"/>
    <property type="project" value="Ensembl"/>
</dbReference>
<dbReference type="GO" id="GO:0030036">
    <property type="term" value="P:actin cytoskeleton organization"/>
    <property type="evidence" value="ECO:0000318"/>
    <property type="project" value="GO_Central"/>
</dbReference>
<dbReference type="GO" id="GO:0060349">
    <property type="term" value="P:bone morphogenesis"/>
    <property type="evidence" value="ECO:0007669"/>
    <property type="project" value="Ensembl"/>
</dbReference>
<dbReference type="GO" id="GO:0048041">
    <property type="term" value="P:focal adhesion assembly"/>
    <property type="evidence" value="ECO:0007669"/>
    <property type="project" value="Ensembl"/>
</dbReference>
<dbReference type="GO" id="GO:0055001">
    <property type="term" value="P:muscle cell development"/>
    <property type="evidence" value="ECO:0000318"/>
    <property type="project" value="GO_Central"/>
</dbReference>
<dbReference type="GO" id="GO:0070885">
    <property type="term" value="P:negative regulation of calcineurin-NFAT signaling cascade"/>
    <property type="evidence" value="ECO:0007669"/>
    <property type="project" value="Ensembl"/>
</dbReference>
<dbReference type="GO" id="GO:0120163">
    <property type="term" value="P:negative regulation of cold-induced thermogenesis"/>
    <property type="evidence" value="ECO:0007669"/>
    <property type="project" value="Ensembl"/>
</dbReference>
<dbReference type="GO" id="GO:0045820">
    <property type="term" value="P:negative regulation of glycolytic process"/>
    <property type="evidence" value="ECO:0007669"/>
    <property type="project" value="Ensembl"/>
</dbReference>
<dbReference type="GO" id="GO:0090324">
    <property type="term" value="P:negative regulation of oxidative phosphorylation"/>
    <property type="evidence" value="ECO:0007669"/>
    <property type="project" value="Ensembl"/>
</dbReference>
<dbReference type="GO" id="GO:1901078">
    <property type="term" value="P:negative regulation of relaxation of muscle"/>
    <property type="evidence" value="ECO:0007669"/>
    <property type="project" value="Ensembl"/>
</dbReference>
<dbReference type="GO" id="GO:1900159">
    <property type="term" value="P:positive regulation of bone mineralization involved in bone maturation"/>
    <property type="evidence" value="ECO:0007669"/>
    <property type="project" value="Ensembl"/>
</dbReference>
<dbReference type="GO" id="GO:0031448">
    <property type="term" value="P:positive regulation of fast-twitch skeletal muscle fiber contraction"/>
    <property type="evidence" value="ECO:0007669"/>
    <property type="project" value="Ensembl"/>
</dbReference>
<dbReference type="GO" id="GO:1904025">
    <property type="term" value="P:positive regulation of glucose catabolic process to lactate via pyruvate"/>
    <property type="evidence" value="ECO:0007669"/>
    <property type="project" value="Ensembl"/>
</dbReference>
<dbReference type="GO" id="GO:0048743">
    <property type="term" value="P:positive regulation of skeletal muscle fiber development"/>
    <property type="evidence" value="ECO:0007669"/>
    <property type="project" value="Ensembl"/>
</dbReference>
<dbReference type="GO" id="GO:0048633">
    <property type="term" value="P:positive regulation of skeletal muscle tissue growth"/>
    <property type="evidence" value="ECO:0007669"/>
    <property type="project" value="Ensembl"/>
</dbReference>
<dbReference type="GO" id="GO:0014728">
    <property type="term" value="P:regulation of the force of skeletal muscle contraction"/>
    <property type="evidence" value="ECO:0007669"/>
    <property type="project" value="Ensembl"/>
</dbReference>
<dbReference type="GO" id="GO:0014894">
    <property type="term" value="P:response to denervation involved in regulation of muscle adaptation"/>
    <property type="evidence" value="ECO:0007669"/>
    <property type="project" value="Ensembl"/>
</dbReference>
<dbReference type="GO" id="GO:0014732">
    <property type="term" value="P:skeletal muscle atrophy"/>
    <property type="evidence" value="ECO:0007669"/>
    <property type="project" value="Ensembl"/>
</dbReference>
<dbReference type="GO" id="GO:0014883">
    <property type="term" value="P:transition between fast and slow fiber"/>
    <property type="evidence" value="ECO:0007669"/>
    <property type="project" value="Ensembl"/>
</dbReference>
<dbReference type="CDD" id="cd21214">
    <property type="entry name" value="CH_ACTN_rpt1"/>
    <property type="match status" value="1"/>
</dbReference>
<dbReference type="CDD" id="cd21216">
    <property type="entry name" value="CH_ACTN_rpt2"/>
    <property type="match status" value="1"/>
</dbReference>
<dbReference type="CDD" id="cd00051">
    <property type="entry name" value="EFh"/>
    <property type="match status" value="1"/>
</dbReference>
<dbReference type="CDD" id="cd00176">
    <property type="entry name" value="SPEC"/>
    <property type="match status" value="2"/>
</dbReference>
<dbReference type="FunFam" id="1.10.238.10:FF:000004">
    <property type="entry name" value="Actinin alpha 1"/>
    <property type="match status" value="1"/>
</dbReference>
<dbReference type="FunFam" id="1.10.418.10:FF:000001">
    <property type="entry name" value="Actinin alpha 1"/>
    <property type="match status" value="1"/>
</dbReference>
<dbReference type="FunFam" id="1.20.58.60:FF:000004">
    <property type="entry name" value="Actinin alpha 1"/>
    <property type="match status" value="1"/>
</dbReference>
<dbReference type="FunFam" id="1.20.58.60:FF:000005">
    <property type="entry name" value="Actinin alpha 1"/>
    <property type="match status" value="1"/>
</dbReference>
<dbReference type="FunFam" id="1.10.238.10:FF:000156">
    <property type="entry name" value="Actinin alpha 4"/>
    <property type="match status" value="1"/>
</dbReference>
<dbReference type="FunFam" id="1.10.418.10:FF:000005">
    <property type="entry name" value="Actinin alpha 4"/>
    <property type="match status" value="1"/>
</dbReference>
<dbReference type="FunFam" id="1.20.58.60:FF:000002">
    <property type="entry name" value="Actinin, alpha 1"/>
    <property type="match status" value="1"/>
</dbReference>
<dbReference type="FunFam" id="1.20.58.60:FF:000003">
    <property type="entry name" value="Actinin, alpha 1"/>
    <property type="match status" value="1"/>
</dbReference>
<dbReference type="Gene3D" id="1.20.58.60">
    <property type="match status" value="4"/>
</dbReference>
<dbReference type="Gene3D" id="1.10.418.10">
    <property type="entry name" value="Calponin-like domain"/>
    <property type="match status" value="2"/>
</dbReference>
<dbReference type="Gene3D" id="1.10.238.10">
    <property type="entry name" value="EF-hand"/>
    <property type="match status" value="2"/>
</dbReference>
<dbReference type="InterPro" id="IPR001589">
    <property type="entry name" value="Actinin_actin-bd_CS"/>
</dbReference>
<dbReference type="InterPro" id="IPR001715">
    <property type="entry name" value="CH_dom"/>
</dbReference>
<dbReference type="InterPro" id="IPR036872">
    <property type="entry name" value="CH_dom_sf"/>
</dbReference>
<dbReference type="InterPro" id="IPR011992">
    <property type="entry name" value="EF-hand-dom_pair"/>
</dbReference>
<dbReference type="InterPro" id="IPR014837">
    <property type="entry name" value="EF-hand_Ca_insen"/>
</dbReference>
<dbReference type="InterPro" id="IPR002048">
    <property type="entry name" value="EF_hand_dom"/>
</dbReference>
<dbReference type="InterPro" id="IPR018159">
    <property type="entry name" value="Spectrin/alpha-actinin"/>
</dbReference>
<dbReference type="InterPro" id="IPR002017">
    <property type="entry name" value="Spectrin_repeat"/>
</dbReference>
<dbReference type="PANTHER" id="PTHR11915">
    <property type="entry name" value="SPECTRIN/FILAMIN RELATED CYTOSKELETAL PROTEIN"/>
    <property type="match status" value="1"/>
</dbReference>
<dbReference type="Pfam" id="PF00307">
    <property type="entry name" value="CH"/>
    <property type="match status" value="2"/>
</dbReference>
<dbReference type="Pfam" id="PF08726">
    <property type="entry name" value="EFhand_Ca_insen"/>
    <property type="match status" value="1"/>
</dbReference>
<dbReference type="Pfam" id="PF00435">
    <property type="entry name" value="Spectrin"/>
    <property type="match status" value="4"/>
</dbReference>
<dbReference type="SMART" id="SM00033">
    <property type="entry name" value="CH"/>
    <property type="match status" value="2"/>
</dbReference>
<dbReference type="SMART" id="SM00054">
    <property type="entry name" value="EFh"/>
    <property type="match status" value="2"/>
</dbReference>
<dbReference type="SMART" id="SM01184">
    <property type="entry name" value="efhand_Ca_insen"/>
    <property type="match status" value="1"/>
</dbReference>
<dbReference type="SMART" id="SM00150">
    <property type="entry name" value="SPEC"/>
    <property type="match status" value="2"/>
</dbReference>
<dbReference type="SUPFAM" id="SSF47576">
    <property type="entry name" value="Calponin-homology domain, CH-domain"/>
    <property type="match status" value="1"/>
</dbReference>
<dbReference type="SUPFAM" id="SSF47473">
    <property type="entry name" value="EF-hand"/>
    <property type="match status" value="1"/>
</dbReference>
<dbReference type="SUPFAM" id="SSF46966">
    <property type="entry name" value="Spectrin repeat"/>
    <property type="match status" value="4"/>
</dbReference>
<dbReference type="PROSITE" id="PS00019">
    <property type="entry name" value="ACTININ_1"/>
    <property type="match status" value="1"/>
</dbReference>
<dbReference type="PROSITE" id="PS00020">
    <property type="entry name" value="ACTININ_2"/>
    <property type="match status" value="1"/>
</dbReference>
<dbReference type="PROSITE" id="PS50021">
    <property type="entry name" value="CH"/>
    <property type="match status" value="2"/>
</dbReference>
<dbReference type="PROSITE" id="PS50222">
    <property type="entry name" value="EF_HAND_2"/>
    <property type="match status" value="2"/>
</dbReference>
<feature type="chain" id="PRO_0000284524" description="Alpha-actinin-3">
    <location>
        <begin position="1"/>
        <end position="901"/>
    </location>
</feature>
<feature type="domain" description="Calponin-homology (CH) 1" evidence="3">
    <location>
        <begin position="45"/>
        <end position="149"/>
    </location>
</feature>
<feature type="domain" description="Calponin-homology (CH) 2" evidence="3">
    <location>
        <begin position="158"/>
        <end position="264"/>
    </location>
</feature>
<feature type="repeat" description="Spectrin 1">
    <location>
        <begin position="288"/>
        <end position="398"/>
    </location>
</feature>
<feature type="repeat" description="Spectrin 2">
    <location>
        <begin position="408"/>
        <end position="513"/>
    </location>
</feature>
<feature type="repeat" description="Spectrin 3">
    <location>
        <begin position="523"/>
        <end position="634"/>
    </location>
</feature>
<feature type="repeat" description="Spectrin 4">
    <location>
        <begin position="644"/>
        <end position="747"/>
    </location>
</feature>
<feature type="domain" description="EF-hand 1" evidence="4">
    <location>
        <begin position="760"/>
        <end position="795"/>
    </location>
</feature>
<feature type="domain" description="EF-hand 2" evidence="4">
    <location>
        <begin position="796"/>
        <end position="831"/>
    </location>
</feature>
<feature type="region of interest" description="Actin-binding">
    <location>
        <begin position="1"/>
        <end position="261"/>
    </location>
</feature>
<feature type="binding site" evidence="5">
    <location>
        <position position="773"/>
    </location>
    <ligand>
        <name>Ca(2+)</name>
        <dbReference type="ChEBI" id="CHEBI:29108"/>
        <label>1</label>
    </ligand>
</feature>
<feature type="binding site" evidence="5">
    <location>
        <position position="777"/>
    </location>
    <ligand>
        <name>Ca(2+)</name>
        <dbReference type="ChEBI" id="CHEBI:29108"/>
        <label>1</label>
    </ligand>
</feature>
<feature type="binding site" evidence="5">
    <location>
        <position position="779"/>
    </location>
    <ligand>
        <name>Ca(2+)</name>
        <dbReference type="ChEBI" id="CHEBI:29108"/>
        <label>1</label>
    </ligand>
</feature>
<feature type="binding site" evidence="5">
    <location>
        <position position="784"/>
    </location>
    <ligand>
        <name>Ca(2+)</name>
        <dbReference type="ChEBI" id="CHEBI:29108"/>
        <label>1</label>
    </ligand>
</feature>
<feature type="binding site" evidence="5">
    <location>
        <position position="809"/>
    </location>
    <ligand>
        <name>Ca(2+)</name>
        <dbReference type="ChEBI" id="CHEBI:29108"/>
        <label>2</label>
    </ligand>
</feature>
<feature type="binding site" evidence="5">
    <location>
        <position position="811"/>
    </location>
    <ligand>
        <name>Ca(2+)</name>
        <dbReference type="ChEBI" id="CHEBI:29108"/>
        <label>2</label>
    </ligand>
</feature>
<feature type="modified residue" description="N-acetylmethionine" evidence="2">
    <location>
        <position position="1"/>
    </location>
</feature>
<gene>
    <name type="primary">ACTN3</name>
</gene>
<name>ACTN3_BOVIN</name>
<comment type="function">
    <text evidence="1">F-actin cross-linking protein which is thought to anchor actin to a variety of intracellular structures. This is a bundling protein (By similarity).</text>
</comment>
<comment type="subunit">
    <text evidence="2">Homodimer; antiparallel. Also forms heterodimers with ACTN2. Interacts with MYOZ1 (By similarity).</text>
</comment>
<comment type="similarity">
    <text evidence="5">Belongs to the alpha-actinin family.</text>
</comment>
<keyword id="KW-0007">Acetylation</keyword>
<keyword id="KW-0009">Actin-binding</keyword>
<keyword id="KW-0106">Calcium</keyword>
<keyword id="KW-0479">Metal-binding</keyword>
<keyword id="KW-1185">Reference proteome</keyword>
<keyword id="KW-0677">Repeat</keyword>
<organism>
    <name type="scientific">Bos taurus</name>
    <name type="common">Bovine</name>
    <dbReference type="NCBI Taxonomy" id="9913"/>
    <lineage>
        <taxon>Eukaryota</taxon>
        <taxon>Metazoa</taxon>
        <taxon>Chordata</taxon>
        <taxon>Craniata</taxon>
        <taxon>Vertebrata</taxon>
        <taxon>Euteleostomi</taxon>
        <taxon>Mammalia</taxon>
        <taxon>Eutheria</taxon>
        <taxon>Laurasiatheria</taxon>
        <taxon>Artiodactyla</taxon>
        <taxon>Ruminantia</taxon>
        <taxon>Pecora</taxon>
        <taxon>Bovidae</taxon>
        <taxon>Bovinae</taxon>
        <taxon>Bos</taxon>
    </lineage>
</organism>
<sequence>MMMVLQPEGLGTGEGPFAGGRGGGEYMEQEEDWDRDLLLDPAWEKQQRKTFTAWCNSHLRKAGTQIENIEEDFRNGLKLMLLLEVISGERLPRPDKGKMRFHKIANVNKALDFIASKGVKLVSIGAEEIVDGNLKMTLGMIWTIILRFAIQDISVEETSAKEGLLLWCQRKTAPYRNVNVQNFHTSWKDGLALCALIHRHRPDLIDYAKLRKDDPIGNLNTAFEVAEKYLDIPKMLDAEDIVNTPKPDEKAIMTYVSCFYHAFAGAEQAETAANRICKVLAVNQENEKLMEEYEKLASELLEWIRRTVPWLENRVGEPSMSAMQRKLEDFRDYRRLHKPPRVQEKCQLEINFNTLQTKLRLSHRPAFMPSEGKLVSDIANAWRGLEQAEKGYEDWLLSEIRRLQRLQHLAEKFQQKASLHEAWTRGKEDMLSQRDYETASLQEVRALLRRHEAFESDLAAHQDRVEHIAALAQELNELDYHEAASVNSRCQAICDQWDNLGTLTQKRRDALERMEKLLETIDQLQLEFARRAAPFNNWLDGAVEDLQDVWLVHSVEETQSLVTAHDQFKATLPEADRERGAILGIQGEIQKICQTYGLRPSSTNPYITLTPQDINTKWDTVRKLVPSRDQMLQEELTRQQVNERLRRQFAAQANAIGPWIQGKVEEVGRLAAGMAGSLEEQMAGLRQQEQNIINYKSNIDRLEGDHQLLQESLVFDNKHTVYSMEHIRVGWEQLLTSIARTINEVENQVLTRDAKGLSQEQLNEFRASFNHFDRKRNGMMEPDDFRACLISMGYDLGEVEFARIMTMVDPNAAGVVTFQAFIDFMTRETAETDTAEQVVASFKILAGDKNYITAEELRRELPAEQAEYCIRRMAPYKGAGAPAGALDYVAFSSALYGESDL</sequence>
<reference key="1">
    <citation type="submission" date="2006-08" db="EMBL/GenBank/DDBJ databases">
        <authorList>
            <consortium name="NIH - Mammalian Gene Collection (MGC) project"/>
        </authorList>
    </citation>
    <scope>NUCLEOTIDE SEQUENCE [LARGE SCALE MRNA]</scope>
    <source>
        <strain>Hereford</strain>
        <tissue>Fetal muscle</tissue>
    </source>
</reference>
<proteinExistence type="evidence at transcript level"/>